<proteinExistence type="inferred from homology"/>
<gene>
    <name evidence="1" type="primary">ispH</name>
    <name type="ordered locus">Rsph17029_0299</name>
</gene>
<protein>
    <recommendedName>
        <fullName evidence="1">4-hydroxy-3-methylbut-2-enyl diphosphate reductase</fullName>
        <shortName evidence="1">HMBPP reductase</shortName>
        <ecNumber evidence="1">1.17.7.4</ecNumber>
    </recommendedName>
</protein>
<evidence type="ECO:0000255" key="1">
    <source>
        <dbReference type="HAMAP-Rule" id="MF_00191"/>
    </source>
</evidence>
<comment type="function">
    <text evidence="1">Catalyzes the conversion of 1-hydroxy-2-methyl-2-(E)-butenyl 4-diphosphate (HMBPP) into a mixture of isopentenyl diphosphate (IPP) and dimethylallyl diphosphate (DMAPP). Acts in the terminal step of the DOXP/MEP pathway for isoprenoid precursor biosynthesis.</text>
</comment>
<comment type="catalytic activity">
    <reaction evidence="1">
        <text>isopentenyl diphosphate + 2 oxidized [2Fe-2S]-[ferredoxin] + H2O = (2E)-4-hydroxy-3-methylbut-2-enyl diphosphate + 2 reduced [2Fe-2S]-[ferredoxin] + 2 H(+)</text>
        <dbReference type="Rhea" id="RHEA:24488"/>
        <dbReference type="Rhea" id="RHEA-COMP:10000"/>
        <dbReference type="Rhea" id="RHEA-COMP:10001"/>
        <dbReference type="ChEBI" id="CHEBI:15377"/>
        <dbReference type="ChEBI" id="CHEBI:15378"/>
        <dbReference type="ChEBI" id="CHEBI:33737"/>
        <dbReference type="ChEBI" id="CHEBI:33738"/>
        <dbReference type="ChEBI" id="CHEBI:128753"/>
        <dbReference type="ChEBI" id="CHEBI:128769"/>
        <dbReference type="EC" id="1.17.7.4"/>
    </reaction>
</comment>
<comment type="catalytic activity">
    <reaction evidence="1">
        <text>dimethylallyl diphosphate + 2 oxidized [2Fe-2S]-[ferredoxin] + H2O = (2E)-4-hydroxy-3-methylbut-2-enyl diphosphate + 2 reduced [2Fe-2S]-[ferredoxin] + 2 H(+)</text>
        <dbReference type="Rhea" id="RHEA:24825"/>
        <dbReference type="Rhea" id="RHEA-COMP:10000"/>
        <dbReference type="Rhea" id="RHEA-COMP:10001"/>
        <dbReference type="ChEBI" id="CHEBI:15377"/>
        <dbReference type="ChEBI" id="CHEBI:15378"/>
        <dbReference type="ChEBI" id="CHEBI:33737"/>
        <dbReference type="ChEBI" id="CHEBI:33738"/>
        <dbReference type="ChEBI" id="CHEBI:57623"/>
        <dbReference type="ChEBI" id="CHEBI:128753"/>
        <dbReference type="EC" id="1.17.7.4"/>
    </reaction>
</comment>
<comment type="cofactor">
    <cofactor evidence="1">
        <name>[4Fe-4S] cluster</name>
        <dbReference type="ChEBI" id="CHEBI:49883"/>
    </cofactor>
    <text evidence="1">Binds 1 [4Fe-4S] cluster per subunit.</text>
</comment>
<comment type="pathway">
    <text evidence="1">Isoprenoid biosynthesis; dimethylallyl diphosphate biosynthesis; dimethylallyl diphosphate from (2E)-4-hydroxy-3-methylbutenyl diphosphate: step 1/1.</text>
</comment>
<comment type="pathway">
    <text evidence="1">Isoprenoid biosynthesis; isopentenyl diphosphate biosynthesis via DXP pathway; isopentenyl diphosphate from 1-deoxy-D-xylulose 5-phosphate: step 6/6.</text>
</comment>
<comment type="similarity">
    <text evidence="1">Belongs to the IspH family.</text>
</comment>
<accession>A3PGE9</accession>
<dbReference type="EC" id="1.17.7.4" evidence="1"/>
<dbReference type="EMBL" id="CP000577">
    <property type="protein sequence ID" value="ABN75415.1"/>
    <property type="molecule type" value="Genomic_DNA"/>
</dbReference>
<dbReference type="RefSeq" id="WP_011840305.1">
    <property type="nucleotide sequence ID" value="NC_009049.1"/>
</dbReference>
<dbReference type="SMR" id="A3PGE9"/>
<dbReference type="KEGG" id="rsh:Rsph17029_0299"/>
<dbReference type="HOGENOM" id="CLU_027486_1_0_5"/>
<dbReference type="UniPathway" id="UPA00056">
    <property type="reaction ID" value="UER00097"/>
</dbReference>
<dbReference type="UniPathway" id="UPA00059">
    <property type="reaction ID" value="UER00105"/>
</dbReference>
<dbReference type="GO" id="GO:0051539">
    <property type="term" value="F:4 iron, 4 sulfur cluster binding"/>
    <property type="evidence" value="ECO:0007669"/>
    <property type="project" value="UniProtKB-UniRule"/>
</dbReference>
<dbReference type="GO" id="GO:0051745">
    <property type="term" value="F:4-hydroxy-3-methylbut-2-enyl diphosphate reductase activity"/>
    <property type="evidence" value="ECO:0007669"/>
    <property type="project" value="UniProtKB-UniRule"/>
</dbReference>
<dbReference type="GO" id="GO:0046872">
    <property type="term" value="F:metal ion binding"/>
    <property type="evidence" value="ECO:0007669"/>
    <property type="project" value="UniProtKB-KW"/>
</dbReference>
<dbReference type="GO" id="GO:0050992">
    <property type="term" value="P:dimethylallyl diphosphate biosynthetic process"/>
    <property type="evidence" value="ECO:0007669"/>
    <property type="project" value="UniProtKB-UniRule"/>
</dbReference>
<dbReference type="GO" id="GO:0019288">
    <property type="term" value="P:isopentenyl diphosphate biosynthetic process, methylerythritol 4-phosphate pathway"/>
    <property type="evidence" value="ECO:0007669"/>
    <property type="project" value="UniProtKB-UniRule"/>
</dbReference>
<dbReference type="GO" id="GO:0016114">
    <property type="term" value="P:terpenoid biosynthetic process"/>
    <property type="evidence" value="ECO:0007669"/>
    <property type="project" value="UniProtKB-UniRule"/>
</dbReference>
<dbReference type="CDD" id="cd13944">
    <property type="entry name" value="lytB_ispH"/>
    <property type="match status" value="1"/>
</dbReference>
<dbReference type="Gene3D" id="3.40.50.11270">
    <property type="match status" value="1"/>
</dbReference>
<dbReference type="Gene3D" id="3.40.1010.20">
    <property type="entry name" value="4-hydroxy-3-methylbut-2-enyl diphosphate reductase, catalytic domain"/>
    <property type="match status" value="2"/>
</dbReference>
<dbReference type="HAMAP" id="MF_00191">
    <property type="entry name" value="IspH"/>
    <property type="match status" value="1"/>
</dbReference>
<dbReference type="InterPro" id="IPR003451">
    <property type="entry name" value="LytB/IspH"/>
</dbReference>
<dbReference type="NCBIfam" id="TIGR00216">
    <property type="entry name" value="ispH_lytB"/>
    <property type="match status" value="1"/>
</dbReference>
<dbReference type="NCBIfam" id="NF002188">
    <property type="entry name" value="PRK01045.1-2"/>
    <property type="match status" value="1"/>
</dbReference>
<dbReference type="NCBIfam" id="NF002190">
    <property type="entry name" value="PRK01045.1-4"/>
    <property type="match status" value="1"/>
</dbReference>
<dbReference type="PANTHER" id="PTHR30426">
    <property type="entry name" value="4-HYDROXY-3-METHYLBUT-2-ENYL DIPHOSPHATE REDUCTASE"/>
    <property type="match status" value="1"/>
</dbReference>
<dbReference type="PANTHER" id="PTHR30426:SF0">
    <property type="entry name" value="4-HYDROXY-3-METHYLBUT-2-ENYL DIPHOSPHATE REDUCTASE"/>
    <property type="match status" value="1"/>
</dbReference>
<dbReference type="Pfam" id="PF02401">
    <property type="entry name" value="LYTB"/>
    <property type="match status" value="1"/>
</dbReference>
<reference key="1">
    <citation type="submission" date="2007-02" db="EMBL/GenBank/DDBJ databases">
        <title>Complete sequence of chromosome 1 of Rhodobacter sphaeroides ATCC 17029.</title>
        <authorList>
            <person name="Copeland A."/>
            <person name="Lucas S."/>
            <person name="Lapidus A."/>
            <person name="Barry K."/>
            <person name="Detter J.C."/>
            <person name="Glavina del Rio T."/>
            <person name="Hammon N."/>
            <person name="Israni S."/>
            <person name="Dalin E."/>
            <person name="Tice H."/>
            <person name="Pitluck S."/>
            <person name="Kiss H."/>
            <person name="Brettin T."/>
            <person name="Bruce D."/>
            <person name="Han C."/>
            <person name="Tapia R."/>
            <person name="Gilna P."/>
            <person name="Schmutz J."/>
            <person name="Larimer F."/>
            <person name="Land M."/>
            <person name="Hauser L."/>
            <person name="Kyrpides N."/>
            <person name="Mikhailova N."/>
            <person name="Richardson P."/>
            <person name="Mackenzie C."/>
            <person name="Choudhary M."/>
            <person name="Donohue T.J."/>
            <person name="Kaplan S."/>
        </authorList>
    </citation>
    <scope>NUCLEOTIDE SEQUENCE [LARGE SCALE GENOMIC DNA]</scope>
    <source>
        <strain>ATCC 17029 / ATH 2.4.9</strain>
    </source>
</reference>
<name>ISPH_CERS1</name>
<sequence>MTMPPLTLYLAAPRGFCAGVDRAIKIVEMALEKWGAPVYVRHEIVHNKFVVDRLRDMGAVFVEELDEAPTDRPVIFSAHGVPKAIPAEAERRNMVYVDATCPLVSKVHLEAERHHENGLQMIMIGHAGHPETVGTMGQLPEGEVLLVETVEDVAGLEVRDPERLAYITQTTLSIDDTAAIVAALRERFPAIAIPRKEDICYATTNRQGAVKAIAGRIDALLVIGAPNSSNSKRLVEVGRAAGCRVAQLVQRATDIDWEALQGATSVGVAAGASAPEVLVDEVIAAFRARFDTTVKAVETVKERVEFKVPRILREPAETP</sequence>
<organism>
    <name type="scientific">Cereibacter sphaeroides (strain ATCC 17029 / ATH 2.4.9)</name>
    <name type="common">Rhodobacter sphaeroides</name>
    <dbReference type="NCBI Taxonomy" id="349101"/>
    <lineage>
        <taxon>Bacteria</taxon>
        <taxon>Pseudomonadati</taxon>
        <taxon>Pseudomonadota</taxon>
        <taxon>Alphaproteobacteria</taxon>
        <taxon>Rhodobacterales</taxon>
        <taxon>Paracoccaceae</taxon>
        <taxon>Cereibacter</taxon>
    </lineage>
</organism>
<feature type="chain" id="PRO_1000021170" description="4-hydroxy-3-methylbut-2-enyl diphosphate reductase">
    <location>
        <begin position="1"/>
        <end position="319"/>
    </location>
</feature>
<feature type="active site" description="Proton donor" evidence="1">
    <location>
        <position position="131"/>
    </location>
</feature>
<feature type="binding site" evidence="1">
    <location>
        <position position="17"/>
    </location>
    <ligand>
        <name>[4Fe-4S] cluster</name>
        <dbReference type="ChEBI" id="CHEBI:49883"/>
    </ligand>
</feature>
<feature type="binding site" evidence="1">
    <location>
        <position position="46"/>
    </location>
    <ligand>
        <name>(2E)-4-hydroxy-3-methylbut-2-enyl diphosphate</name>
        <dbReference type="ChEBI" id="CHEBI:128753"/>
    </ligand>
</feature>
<feature type="binding site" evidence="1">
    <location>
        <position position="46"/>
    </location>
    <ligand>
        <name>dimethylallyl diphosphate</name>
        <dbReference type="ChEBI" id="CHEBI:57623"/>
    </ligand>
</feature>
<feature type="binding site" evidence="1">
    <location>
        <position position="46"/>
    </location>
    <ligand>
        <name>isopentenyl diphosphate</name>
        <dbReference type="ChEBI" id="CHEBI:128769"/>
    </ligand>
</feature>
<feature type="binding site" evidence="1">
    <location>
        <position position="79"/>
    </location>
    <ligand>
        <name>(2E)-4-hydroxy-3-methylbut-2-enyl diphosphate</name>
        <dbReference type="ChEBI" id="CHEBI:128753"/>
    </ligand>
</feature>
<feature type="binding site" evidence="1">
    <location>
        <position position="79"/>
    </location>
    <ligand>
        <name>dimethylallyl diphosphate</name>
        <dbReference type="ChEBI" id="CHEBI:57623"/>
    </ligand>
</feature>
<feature type="binding site" evidence="1">
    <location>
        <position position="79"/>
    </location>
    <ligand>
        <name>isopentenyl diphosphate</name>
        <dbReference type="ChEBI" id="CHEBI:128769"/>
    </ligand>
</feature>
<feature type="binding site" evidence="1">
    <location>
        <position position="101"/>
    </location>
    <ligand>
        <name>[4Fe-4S] cluster</name>
        <dbReference type="ChEBI" id="CHEBI:49883"/>
    </ligand>
</feature>
<feature type="binding site" evidence="1">
    <location>
        <position position="129"/>
    </location>
    <ligand>
        <name>(2E)-4-hydroxy-3-methylbut-2-enyl diphosphate</name>
        <dbReference type="ChEBI" id="CHEBI:128753"/>
    </ligand>
</feature>
<feature type="binding site" evidence="1">
    <location>
        <position position="129"/>
    </location>
    <ligand>
        <name>dimethylallyl diphosphate</name>
        <dbReference type="ChEBI" id="CHEBI:57623"/>
    </ligand>
</feature>
<feature type="binding site" evidence="1">
    <location>
        <position position="129"/>
    </location>
    <ligand>
        <name>isopentenyl diphosphate</name>
        <dbReference type="ChEBI" id="CHEBI:128769"/>
    </ligand>
</feature>
<feature type="binding site" evidence="1">
    <location>
        <position position="170"/>
    </location>
    <ligand>
        <name>(2E)-4-hydroxy-3-methylbut-2-enyl diphosphate</name>
        <dbReference type="ChEBI" id="CHEBI:128753"/>
    </ligand>
</feature>
<feature type="binding site" evidence="1">
    <location>
        <position position="200"/>
    </location>
    <ligand>
        <name>[4Fe-4S] cluster</name>
        <dbReference type="ChEBI" id="CHEBI:49883"/>
    </ligand>
</feature>
<feature type="binding site" evidence="1">
    <location>
        <position position="228"/>
    </location>
    <ligand>
        <name>(2E)-4-hydroxy-3-methylbut-2-enyl diphosphate</name>
        <dbReference type="ChEBI" id="CHEBI:128753"/>
    </ligand>
</feature>
<feature type="binding site" evidence="1">
    <location>
        <position position="228"/>
    </location>
    <ligand>
        <name>dimethylallyl diphosphate</name>
        <dbReference type="ChEBI" id="CHEBI:57623"/>
    </ligand>
</feature>
<feature type="binding site" evidence="1">
    <location>
        <position position="228"/>
    </location>
    <ligand>
        <name>isopentenyl diphosphate</name>
        <dbReference type="ChEBI" id="CHEBI:128769"/>
    </ligand>
</feature>
<feature type="binding site" evidence="1">
    <location>
        <position position="229"/>
    </location>
    <ligand>
        <name>(2E)-4-hydroxy-3-methylbut-2-enyl diphosphate</name>
        <dbReference type="ChEBI" id="CHEBI:128753"/>
    </ligand>
</feature>
<feature type="binding site" evidence="1">
    <location>
        <position position="229"/>
    </location>
    <ligand>
        <name>dimethylallyl diphosphate</name>
        <dbReference type="ChEBI" id="CHEBI:57623"/>
    </ligand>
</feature>
<feature type="binding site" evidence="1">
    <location>
        <position position="229"/>
    </location>
    <ligand>
        <name>isopentenyl diphosphate</name>
        <dbReference type="ChEBI" id="CHEBI:128769"/>
    </ligand>
</feature>
<feature type="binding site" evidence="1">
    <location>
        <position position="230"/>
    </location>
    <ligand>
        <name>(2E)-4-hydroxy-3-methylbut-2-enyl diphosphate</name>
        <dbReference type="ChEBI" id="CHEBI:128753"/>
    </ligand>
</feature>
<feature type="binding site" evidence="1">
    <location>
        <position position="230"/>
    </location>
    <ligand>
        <name>dimethylallyl diphosphate</name>
        <dbReference type="ChEBI" id="CHEBI:57623"/>
    </ligand>
</feature>
<feature type="binding site" evidence="1">
    <location>
        <position position="230"/>
    </location>
    <ligand>
        <name>isopentenyl diphosphate</name>
        <dbReference type="ChEBI" id="CHEBI:128769"/>
    </ligand>
</feature>
<feature type="binding site" evidence="1">
    <location>
        <position position="273"/>
    </location>
    <ligand>
        <name>(2E)-4-hydroxy-3-methylbut-2-enyl diphosphate</name>
        <dbReference type="ChEBI" id="CHEBI:128753"/>
    </ligand>
</feature>
<feature type="binding site" evidence="1">
    <location>
        <position position="273"/>
    </location>
    <ligand>
        <name>dimethylallyl diphosphate</name>
        <dbReference type="ChEBI" id="CHEBI:57623"/>
    </ligand>
</feature>
<feature type="binding site" evidence="1">
    <location>
        <position position="273"/>
    </location>
    <ligand>
        <name>isopentenyl diphosphate</name>
        <dbReference type="ChEBI" id="CHEBI:128769"/>
    </ligand>
</feature>
<keyword id="KW-0004">4Fe-4S</keyword>
<keyword id="KW-0408">Iron</keyword>
<keyword id="KW-0411">Iron-sulfur</keyword>
<keyword id="KW-0414">Isoprene biosynthesis</keyword>
<keyword id="KW-0479">Metal-binding</keyword>
<keyword id="KW-0560">Oxidoreductase</keyword>